<sequence>MAAAHLLRASRVWARWHPRALPVLRRPGGFSIREYAKKPVGKGGKGGVAAEALKDPEVCTDPTQLTTHAMGVNIYKEGQDVALKADSEYPTWLFQVNLGPPKKLEELEPESREYWRLLRKQNIWRHNRLSKNKKL</sequence>
<comment type="subunit">
    <text evidence="1">Component of the mitochondrial ribosome large subunit (39S) which comprises a 16S rRNA and about 50 distinct proteins.</text>
</comment>
<comment type="subcellular location">
    <subcellularLocation>
        <location evidence="1">Mitochondrion</location>
    </subcellularLocation>
</comment>
<comment type="similarity">
    <text evidence="3">Belongs to the mitochondrion-specific ribosomal protein mL54 family.</text>
</comment>
<name>RM54_MOUSE</name>
<reference key="1">
    <citation type="journal article" date="2005" name="Science">
        <title>The transcriptional landscape of the mammalian genome.</title>
        <authorList>
            <person name="Carninci P."/>
            <person name="Kasukawa T."/>
            <person name="Katayama S."/>
            <person name="Gough J."/>
            <person name="Frith M.C."/>
            <person name="Maeda N."/>
            <person name="Oyama R."/>
            <person name="Ravasi T."/>
            <person name="Lenhard B."/>
            <person name="Wells C."/>
            <person name="Kodzius R."/>
            <person name="Shimokawa K."/>
            <person name="Bajic V.B."/>
            <person name="Brenner S.E."/>
            <person name="Batalov S."/>
            <person name="Forrest A.R."/>
            <person name="Zavolan M."/>
            <person name="Davis M.J."/>
            <person name="Wilming L.G."/>
            <person name="Aidinis V."/>
            <person name="Allen J.E."/>
            <person name="Ambesi-Impiombato A."/>
            <person name="Apweiler R."/>
            <person name="Aturaliya R.N."/>
            <person name="Bailey T.L."/>
            <person name="Bansal M."/>
            <person name="Baxter L."/>
            <person name="Beisel K.W."/>
            <person name="Bersano T."/>
            <person name="Bono H."/>
            <person name="Chalk A.M."/>
            <person name="Chiu K.P."/>
            <person name="Choudhary V."/>
            <person name="Christoffels A."/>
            <person name="Clutterbuck D.R."/>
            <person name="Crowe M.L."/>
            <person name="Dalla E."/>
            <person name="Dalrymple B.P."/>
            <person name="de Bono B."/>
            <person name="Della Gatta G."/>
            <person name="di Bernardo D."/>
            <person name="Down T."/>
            <person name="Engstrom P."/>
            <person name="Fagiolini M."/>
            <person name="Faulkner G."/>
            <person name="Fletcher C.F."/>
            <person name="Fukushima T."/>
            <person name="Furuno M."/>
            <person name="Futaki S."/>
            <person name="Gariboldi M."/>
            <person name="Georgii-Hemming P."/>
            <person name="Gingeras T.R."/>
            <person name="Gojobori T."/>
            <person name="Green R.E."/>
            <person name="Gustincich S."/>
            <person name="Harbers M."/>
            <person name="Hayashi Y."/>
            <person name="Hensch T.K."/>
            <person name="Hirokawa N."/>
            <person name="Hill D."/>
            <person name="Huminiecki L."/>
            <person name="Iacono M."/>
            <person name="Ikeo K."/>
            <person name="Iwama A."/>
            <person name="Ishikawa T."/>
            <person name="Jakt M."/>
            <person name="Kanapin A."/>
            <person name="Katoh M."/>
            <person name="Kawasawa Y."/>
            <person name="Kelso J."/>
            <person name="Kitamura H."/>
            <person name="Kitano H."/>
            <person name="Kollias G."/>
            <person name="Krishnan S.P."/>
            <person name="Kruger A."/>
            <person name="Kummerfeld S.K."/>
            <person name="Kurochkin I.V."/>
            <person name="Lareau L.F."/>
            <person name="Lazarevic D."/>
            <person name="Lipovich L."/>
            <person name="Liu J."/>
            <person name="Liuni S."/>
            <person name="McWilliam S."/>
            <person name="Madan Babu M."/>
            <person name="Madera M."/>
            <person name="Marchionni L."/>
            <person name="Matsuda H."/>
            <person name="Matsuzawa S."/>
            <person name="Miki H."/>
            <person name="Mignone F."/>
            <person name="Miyake S."/>
            <person name="Morris K."/>
            <person name="Mottagui-Tabar S."/>
            <person name="Mulder N."/>
            <person name="Nakano N."/>
            <person name="Nakauchi H."/>
            <person name="Ng P."/>
            <person name="Nilsson R."/>
            <person name="Nishiguchi S."/>
            <person name="Nishikawa S."/>
            <person name="Nori F."/>
            <person name="Ohara O."/>
            <person name="Okazaki Y."/>
            <person name="Orlando V."/>
            <person name="Pang K.C."/>
            <person name="Pavan W.J."/>
            <person name="Pavesi G."/>
            <person name="Pesole G."/>
            <person name="Petrovsky N."/>
            <person name="Piazza S."/>
            <person name="Reed J."/>
            <person name="Reid J.F."/>
            <person name="Ring B.Z."/>
            <person name="Ringwald M."/>
            <person name="Rost B."/>
            <person name="Ruan Y."/>
            <person name="Salzberg S.L."/>
            <person name="Sandelin A."/>
            <person name="Schneider C."/>
            <person name="Schoenbach C."/>
            <person name="Sekiguchi K."/>
            <person name="Semple C.A."/>
            <person name="Seno S."/>
            <person name="Sessa L."/>
            <person name="Sheng Y."/>
            <person name="Shibata Y."/>
            <person name="Shimada H."/>
            <person name="Shimada K."/>
            <person name="Silva D."/>
            <person name="Sinclair B."/>
            <person name="Sperling S."/>
            <person name="Stupka E."/>
            <person name="Sugiura K."/>
            <person name="Sultana R."/>
            <person name="Takenaka Y."/>
            <person name="Taki K."/>
            <person name="Tammoja K."/>
            <person name="Tan S.L."/>
            <person name="Tang S."/>
            <person name="Taylor M.S."/>
            <person name="Tegner J."/>
            <person name="Teichmann S.A."/>
            <person name="Ueda H.R."/>
            <person name="van Nimwegen E."/>
            <person name="Verardo R."/>
            <person name="Wei C.L."/>
            <person name="Yagi K."/>
            <person name="Yamanishi H."/>
            <person name="Zabarovsky E."/>
            <person name="Zhu S."/>
            <person name="Zimmer A."/>
            <person name="Hide W."/>
            <person name="Bult C."/>
            <person name="Grimmond S.M."/>
            <person name="Teasdale R.D."/>
            <person name="Liu E.T."/>
            <person name="Brusic V."/>
            <person name="Quackenbush J."/>
            <person name="Wahlestedt C."/>
            <person name="Mattick J.S."/>
            <person name="Hume D.A."/>
            <person name="Kai C."/>
            <person name="Sasaki D."/>
            <person name="Tomaru Y."/>
            <person name="Fukuda S."/>
            <person name="Kanamori-Katayama M."/>
            <person name="Suzuki M."/>
            <person name="Aoki J."/>
            <person name="Arakawa T."/>
            <person name="Iida J."/>
            <person name="Imamura K."/>
            <person name="Itoh M."/>
            <person name="Kato T."/>
            <person name="Kawaji H."/>
            <person name="Kawagashira N."/>
            <person name="Kawashima T."/>
            <person name="Kojima M."/>
            <person name="Kondo S."/>
            <person name="Konno H."/>
            <person name="Nakano K."/>
            <person name="Ninomiya N."/>
            <person name="Nishio T."/>
            <person name="Okada M."/>
            <person name="Plessy C."/>
            <person name="Shibata K."/>
            <person name="Shiraki T."/>
            <person name="Suzuki S."/>
            <person name="Tagami M."/>
            <person name="Waki K."/>
            <person name="Watahiki A."/>
            <person name="Okamura-Oho Y."/>
            <person name="Suzuki H."/>
            <person name="Kawai J."/>
            <person name="Hayashizaki Y."/>
        </authorList>
    </citation>
    <scope>NUCLEOTIDE SEQUENCE [LARGE SCALE MRNA]</scope>
    <source>
        <strain>C57BL/6J</strain>
        <tissue>Embryo</tissue>
        <tissue>Tongue</tissue>
    </source>
</reference>
<reference key="2">
    <citation type="journal article" date="2004" name="Genome Res.">
        <title>The status, quality, and expansion of the NIH full-length cDNA project: the Mammalian Gene Collection (MGC).</title>
        <authorList>
            <consortium name="The MGC Project Team"/>
        </authorList>
    </citation>
    <scope>NUCLEOTIDE SEQUENCE [LARGE SCALE MRNA]</scope>
    <source>
        <strain>C57BL/6J</strain>
        <tissue>Brain</tissue>
    </source>
</reference>
<reference key="3">
    <citation type="journal article" date="2010" name="Cell">
        <title>A tissue-specific atlas of mouse protein phosphorylation and expression.</title>
        <authorList>
            <person name="Huttlin E.L."/>
            <person name="Jedrychowski M.P."/>
            <person name="Elias J.E."/>
            <person name="Goswami T."/>
            <person name="Rad R."/>
            <person name="Beausoleil S.A."/>
            <person name="Villen J."/>
            <person name="Haas W."/>
            <person name="Sowa M.E."/>
            <person name="Gygi S.P."/>
        </authorList>
    </citation>
    <scope>IDENTIFICATION BY MASS SPECTROMETRY [LARGE SCALE ANALYSIS]</scope>
    <source>
        <tissue>Brain</tissue>
        <tissue>Brown adipose tissue</tissue>
        <tissue>Heart</tissue>
        <tissue>Kidney</tissue>
        <tissue>Liver</tissue>
        <tissue>Lung</tissue>
        <tissue>Pancreas</tissue>
        <tissue>Spleen</tissue>
        <tissue>Testis</tissue>
    </source>
</reference>
<keyword id="KW-0496">Mitochondrion</keyword>
<keyword id="KW-1185">Reference proteome</keyword>
<keyword id="KW-0687">Ribonucleoprotein</keyword>
<keyword id="KW-0689">Ribosomal protein</keyword>
<keyword id="KW-0809">Transit peptide</keyword>
<evidence type="ECO:0000250" key="1">
    <source>
        <dbReference type="UniProtKB" id="Q6P161"/>
    </source>
</evidence>
<evidence type="ECO:0000255" key="2"/>
<evidence type="ECO:0000305" key="3"/>
<protein>
    <recommendedName>
        <fullName evidence="3">Large ribosomal subunit protein mL54</fullName>
    </recommendedName>
    <alternativeName>
        <fullName>39S ribosomal protein L54, mitochondrial</fullName>
        <shortName>L54mt</shortName>
        <shortName>MRP-L54</shortName>
    </alternativeName>
</protein>
<accession>Q9CPW3</accession>
<proteinExistence type="evidence at protein level"/>
<dbReference type="EMBL" id="AK003225">
    <property type="protein sequence ID" value="BAB22654.1"/>
    <property type="molecule type" value="mRNA"/>
</dbReference>
<dbReference type="EMBL" id="AK009657">
    <property type="protein sequence ID" value="BAB26421.1"/>
    <property type="molecule type" value="mRNA"/>
</dbReference>
<dbReference type="EMBL" id="BC056985">
    <property type="protein sequence ID" value="AAH56985.1"/>
    <property type="molecule type" value="mRNA"/>
</dbReference>
<dbReference type="CCDS" id="CCDS24049.1"/>
<dbReference type="RefSeq" id="NP_079593.1">
    <property type="nucleotide sequence ID" value="NM_025317.2"/>
</dbReference>
<dbReference type="SMR" id="Q9CPW3"/>
<dbReference type="BioGRID" id="211175">
    <property type="interactions" value="9"/>
</dbReference>
<dbReference type="ComplexPortal" id="CPX-5302">
    <property type="entry name" value="39S mitochondrial large ribosomal subunit"/>
</dbReference>
<dbReference type="FunCoup" id="Q9CPW3">
    <property type="interactions" value="1259"/>
</dbReference>
<dbReference type="STRING" id="10090.ENSMUSP00000039951"/>
<dbReference type="PhosphoSitePlus" id="Q9CPW3"/>
<dbReference type="PaxDb" id="10090-ENSMUSP00000039951"/>
<dbReference type="PeptideAtlas" id="Q9CPW3"/>
<dbReference type="ProteomicsDB" id="299912"/>
<dbReference type="Pumba" id="Q9CPW3"/>
<dbReference type="Antibodypedia" id="23347">
    <property type="antibodies" value="168 antibodies from 23 providers"/>
</dbReference>
<dbReference type="DNASU" id="66047"/>
<dbReference type="Ensembl" id="ENSMUST00000046114.5">
    <property type="protein sequence ID" value="ENSMUSP00000039951.5"/>
    <property type="gene ID" value="ENSMUSG00000034932.5"/>
</dbReference>
<dbReference type="GeneID" id="66047"/>
<dbReference type="KEGG" id="mmu:66047"/>
<dbReference type="UCSC" id="uc007ggy.1">
    <property type="organism name" value="mouse"/>
</dbReference>
<dbReference type="AGR" id="MGI:1913297"/>
<dbReference type="CTD" id="116541"/>
<dbReference type="MGI" id="MGI:1913297">
    <property type="gene designation" value="Mrpl54"/>
</dbReference>
<dbReference type="VEuPathDB" id="HostDB:ENSMUSG00000034932"/>
<dbReference type="eggNOG" id="KOG3435">
    <property type="taxonomic scope" value="Eukaryota"/>
</dbReference>
<dbReference type="GeneTree" id="ENSGT00390000001201"/>
<dbReference type="HOGENOM" id="CLU_143073_1_1_1"/>
<dbReference type="InParanoid" id="Q9CPW3"/>
<dbReference type="OMA" id="WLFEMNV"/>
<dbReference type="OrthoDB" id="10252718at2759"/>
<dbReference type="PhylomeDB" id="Q9CPW3"/>
<dbReference type="TreeFam" id="TF314007"/>
<dbReference type="Reactome" id="R-MMU-5389840">
    <property type="pathway name" value="Mitochondrial translation elongation"/>
</dbReference>
<dbReference type="Reactome" id="R-MMU-5419276">
    <property type="pathway name" value="Mitochondrial translation termination"/>
</dbReference>
<dbReference type="BioGRID-ORCS" id="66047">
    <property type="hits" value="14 hits in 78 CRISPR screens"/>
</dbReference>
<dbReference type="ChiTaRS" id="Mrpl54">
    <property type="organism name" value="mouse"/>
</dbReference>
<dbReference type="PRO" id="PR:Q9CPW3"/>
<dbReference type="Proteomes" id="UP000000589">
    <property type="component" value="Chromosome 10"/>
</dbReference>
<dbReference type="RNAct" id="Q9CPW3">
    <property type="molecule type" value="protein"/>
</dbReference>
<dbReference type="Bgee" id="ENSMUSG00000034932">
    <property type="expression patterns" value="Expressed in right kidney and 276 other cell types or tissues"/>
</dbReference>
<dbReference type="GO" id="GO:0005743">
    <property type="term" value="C:mitochondrial inner membrane"/>
    <property type="evidence" value="ECO:0000303"/>
    <property type="project" value="ComplexPortal"/>
</dbReference>
<dbReference type="GO" id="GO:0005762">
    <property type="term" value="C:mitochondrial large ribosomal subunit"/>
    <property type="evidence" value="ECO:0000250"/>
    <property type="project" value="UniProtKB"/>
</dbReference>
<dbReference type="GO" id="GO:0005739">
    <property type="term" value="C:mitochondrion"/>
    <property type="evidence" value="ECO:0007005"/>
    <property type="project" value="MGI"/>
</dbReference>
<dbReference type="GO" id="GO:0032543">
    <property type="term" value="P:mitochondrial translation"/>
    <property type="evidence" value="ECO:0000303"/>
    <property type="project" value="ComplexPortal"/>
</dbReference>
<dbReference type="InterPro" id="IPR013870">
    <property type="entry name" value="Ribosomal_mL54"/>
</dbReference>
<dbReference type="PANTHER" id="PTHR28595">
    <property type="entry name" value="39S RIBOSOMAL PROTEIN L54, MITOCHONDRIAL"/>
    <property type="match status" value="1"/>
</dbReference>
<dbReference type="PANTHER" id="PTHR28595:SF1">
    <property type="entry name" value="LARGE RIBOSOMAL SUBUNIT PROTEIN ML54"/>
    <property type="match status" value="1"/>
</dbReference>
<dbReference type="Pfam" id="PF08561">
    <property type="entry name" value="Ribosomal_L37"/>
    <property type="match status" value="1"/>
</dbReference>
<feature type="transit peptide" description="Mitochondrion" evidence="2">
    <location>
        <begin position="1"/>
        <end position="14"/>
    </location>
</feature>
<feature type="chain" id="PRO_0000278281" description="Large ribosomal subunit protein mL54">
    <location>
        <begin position="15"/>
        <end position="135"/>
    </location>
</feature>
<organism>
    <name type="scientific">Mus musculus</name>
    <name type="common">Mouse</name>
    <dbReference type="NCBI Taxonomy" id="10090"/>
    <lineage>
        <taxon>Eukaryota</taxon>
        <taxon>Metazoa</taxon>
        <taxon>Chordata</taxon>
        <taxon>Craniata</taxon>
        <taxon>Vertebrata</taxon>
        <taxon>Euteleostomi</taxon>
        <taxon>Mammalia</taxon>
        <taxon>Eutheria</taxon>
        <taxon>Euarchontoglires</taxon>
        <taxon>Glires</taxon>
        <taxon>Rodentia</taxon>
        <taxon>Myomorpha</taxon>
        <taxon>Muroidea</taxon>
        <taxon>Muridae</taxon>
        <taxon>Murinae</taxon>
        <taxon>Mus</taxon>
        <taxon>Mus</taxon>
    </lineage>
</organism>
<gene>
    <name type="primary">Mrpl54</name>
</gene>